<dbReference type="EC" id="3.2.1.23"/>
<dbReference type="EMBL" id="CH476600">
    <property type="protein sequence ID" value="EAU34200.1"/>
    <property type="status" value="ALT_SEQ"/>
    <property type="molecule type" value="Genomic_DNA"/>
</dbReference>
<dbReference type="RefSeq" id="XP_001214309.1">
    <property type="nucleotide sequence ID" value="XM_001214309.1"/>
</dbReference>
<dbReference type="SMR" id="Q0CMF3"/>
<dbReference type="STRING" id="341663.Q0CMF3"/>
<dbReference type="GlyCosmos" id="Q0CMF3">
    <property type="glycosylation" value="13 sites, No reported glycans"/>
</dbReference>
<dbReference type="GeneID" id="4320669"/>
<dbReference type="eggNOG" id="KOG0496">
    <property type="taxonomic scope" value="Eukaryota"/>
</dbReference>
<dbReference type="OrthoDB" id="1657402at2759"/>
<dbReference type="Proteomes" id="UP000007963">
    <property type="component" value="Unassembled WGS sequence"/>
</dbReference>
<dbReference type="GO" id="GO:0005576">
    <property type="term" value="C:extracellular region"/>
    <property type="evidence" value="ECO:0007669"/>
    <property type="project" value="UniProtKB-SubCell"/>
</dbReference>
<dbReference type="GO" id="GO:0004565">
    <property type="term" value="F:beta-galactosidase activity"/>
    <property type="evidence" value="ECO:0007669"/>
    <property type="project" value="UniProtKB-EC"/>
</dbReference>
<dbReference type="GO" id="GO:0000272">
    <property type="term" value="P:polysaccharide catabolic process"/>
    <property type="evidence" value="ECO:0007669"/>
    <property type="project" value="UniProtKB-KW"/>
</dbReference>
<dbReference type="FunFam" id="2.102.20.10:FF:000001">
    <property type="entry name" value="Beta-galactosidase A"/>
    <property type="match status" value="1"/>
</dbReference>
<dbReference type="FunFam" id="2.60.120.260:FF:000065">
    <property type="entry name" value="Beta-galactosidase A"/>
    <property type="match status" value="1"/>
</dbReference>
<dbReference type="FunFam" id="2.60.390.10:FF:000001">
    <property type="entry name" value="Beta-galactosidase A"/>
    <property type="match status" value="1"/>
</dbReference>
<dbReference type="FunFam" id="3.20.20.80:FF:000040">
    <property type="entry name" value="Beta-galactosidase A"/>
    <property type="match status" value="1"/>
</dbReference>
<dbReference type="Gene3D" id="2.102.20.10">
    <property type="entry name" value="Beta-galactosidase, domain 2"/>
    <property type="match status" value="1"/>
</dbReference>
<dbReference type="Gene3D" id="2.60.390.10">
    <property type="entry name" value="Beta-galactosidase, domain 3"/>
    <property type="match status" value="1"/>
</dbReference>
<dbReference type="Gene3D" id="2.60.120.260">
    <property type="entry name" value="Galactose-binding domain-like"/>
    <property type="match status" value="2"/>
</dbReference>
<dbReference type="Gene3D" id="3.20.20.80">
    <property type="entry name" value="Glycosidases"/>
    <property type="match status" value="1"/>
</dbReference>
<dbReference type="InterPro" id="IPR018954">
    <property type="entry name" value="Betagal_dom2"/>
</dbReference>
<dbReference type="InterPro" id="IPR037110">
    <property type="entry name" value="Betagal_dom2_sf"/>
</dbReference>
<dbReference type="InterPro" id="IPR025972">
    <property type="entry name" value="BetaGal_dom3"/>
</dbReference>
<dbReference type="InterPro" id="IPR036833">
    <property type="entry name" value="BetaGal_dom3_sf"/>
</dbReference>
<dbReference type="InterPro" id="IPR025300">
    <property type="entry name" value="BetaGal_jelly_roll_dom"/>
</dbReference>
<dbReference type="InterPro" id="IPR008979">
    <property type="entry name" value="Galactose-bd-like_sf"/>
</dbReference>
<dbReference type="InterPro" id="IPR031330">
    <property type="entry name" value="Gly_Hdrlase_35_cat"/>
</dbReference>
<dbReference type="InterPro" id="IPR001944">
    <property type="entry name" value="Glycoside_Hdrlase_35"/>
</dbReference>
<dbReference type="InterPro" id="IPR017853">
    <property type="entry name" value="Glycoside_hydrolase_SF"/>
</dbReference>
<dbReference type="PANTHER" id="PTHR23421">
    <property type="entry name" value="BETA-GALACTOSIDASE RELATED"/>
    <property type="match status" value="1"/>
</dbReference>
<dbReference type="Pfam" id="PF13364">
    <property type="entry name" value="BetaGal_ABD2"/>
    <property type="match status" value="2"/>
</dbReference>
<dbReference type="Pfam" id="PF10435">
    <property type="entry name" value="BetaGal_dom2"/>
    <property type="match status" value="1"/>
</dbReference>
<dbReference type="Pfam" id="PF13363">
    <property type="entry name" value="BetaGal_dom3"/>
    <property type="match status" value="1"/>
</dbReference>
<dbReference type="Pfam" id="PF01301">
    <property type="entry name" value="Glyco_hydro_35"/>
    <property type="match status" value="1"/>
</dbReference>
<dbReference type="PRINTS" id="PR00742">
    <property type="entry name" value="GLHYDRLASE35"/>
</dbReference>
<dbReference type="SMART" id="SM01029">
    <property type="entry name" value="BetaGal_dom2"/>
    <property type="match status" value="1"/>
</dbReference>
<dbReference type="SUPFAM" id="SSF51445">
    <property type="entry name" value="(Trans)glycosidases"/>
    <property type="match status" value="1"/>
</dbReference>
<dbReference type="SUPFAM" id="SSF117100">
    <property type="entry name" value="Beta-galactosidase LacA, domain 3"/>
    <property type="match status" value="1"/>
</dbReference>
<dbReference type="SUPFAM" id="SSF49785">
    <property type="entry name" value="Galactose-binding domain-like"/>
    <property type="match status" value="2"/>
</dbReference>
<dbReference type="SUPFAM" id="SSF51011">
    <property type="entry name" value="Glycosyl hydrolase domain"/>
    <property type="match status" value="1"/>
</dbReference>
<evidence type="ECO:0000250" key="1"/>
<evidence type="ECO:0000255" key="2"/>
<evidence type="ECO:0000305" key="3"/>
<gene>
    <name type="primary">lacB</name>
    <name type="ORF">ATEG_05131</name>
</gene>
<keyword id="KW-0119">Carbohydrate metabolism</keyword>
<keyword id="KW-1015">Disulfide bond</keyword>
<keyword id="KW-0325">Glycoprotein</keyword>
<keyword id="KW-0326">Glycosidase</keyword>
<keyword id="KW-0378">Hydrolase</keyword>
<keyword id="KW-0624">Polysaccharide degradation</keyword>
<keyword id="KW-1185">Reference proteome</keyword>
<keyword id="KW-0964">Secreted</keyword>
<keyword id="KW-0732">Signal</keyword>
<reference key="1">
    <citation type="submission" date="2005-09" db="EMBL/GenBank/DDBJ databases">
        <title>Annotation of the Aspergillus terreus NIH2624 genome.</title>
        <authorList>
            <person name="Birren B.W."/>
            <person name="Lander E.S."/>
            <person name="Galagan J.E."/>
            <person name="Nusbaum C."/>
            <person name="Devon K."/>
            <person name="Henn M."/>
            <person name="Ma L.-J."/>
            <person name="Jaffe D.B."/>
            <person name="Butler J."/>
            <person name="Alvarez P."/>
            <person name="Gnerre S."/>
            <person name="Grabherr M."/>
            <person name="Kleber M."/>
            <person name="Mauceli E.W."/>
            <person name="Brockman W."/>
            <person name="Rounsley S."/>
            <person name="Young S.K."/>
            <person name="LaButti K."/>
            <person name="Pushparaj V."/>
            <person name="DeCaprio D."/>
            <person name="Crawford M."/>
            <person name="Koehrsen M."/>
            <person name="Engels R."/>
            <person name="Montgomery P."/>
            <person name="Pearson M."/>
            <person name="Howarth C."/>
            <person name="Larson L."/>
            <person name="Luoma S."/>
            <person name="White J."/>
            <person name="Alvarado L."/>
            <person name="Kodira C.D."/>
            <person name="Zeng Q."/>
            <person name="Oleary S."/>
            <person name="Yandava C."/>
            <person name="Denning D.W."/>
            <person name="Nierman W.C."/>
            <person name="Milne T."/>
            <person name="Madden K."/>
        </authorList>
    </citation>
    <scope>NUCLEOTIDE SEQUENCE [LARGE SCALE GENOMIC DNA]</scope>
    <source>
        <strain>NIH 2624 / FGSC A1156</strain>
    </source>
</reference>
<sequence>MARFPQLLFLLLASIGLLSAAQNHSDSEWPLHDNGLSTVVQWDHYSFHVHGQRIFVFSGEFHYWRIPVPGLWRDILEKIKAAGFTAFAFYSSWGYHAPNNHTVDFSTGARDITPIYELAKELGMYIIVRPGPYVNAEASAGGYPLWVTTGAYGSLRNDDARYTAAWKPYFAKMSEITSQYQVTDGHNTFCYQIENEYGQQWIGDPVDRNPNQTAVAYMELLEASARENGIVVPLTANDPNMNTKSWGSDWSHAGGNVDVVGLDSYPSCWTCDVTQCTSTNGEYVPYKVMQYYDYFQEVQPTMPGFMPEFQGGSYNPWAGPEGGCPGDTGVDFANLFYRWNIAQRVTAMSLYMLYGGTNWGAIAAPVTATSYDYSSPISEDRSIGSKYYETKLLALFTRSATDLTMTDRIGNGTHYTNNPAVAAYELRNPVTNGAFYVTIHADSTVGTDESFRLNVNTSAGALTVPSKGSIRLNGHQSKIIVTDFRFGPSHTLLYSTAEVLTHAVMDKKATLVLWVPTGESGEFAVKGAKSGKVERCPQCSNATFTRKKDVLVVNFTQAGGMSVLQLNNGVRVVLLDRAAAYKFWAPPLTDDPFAPETDLVLVQGPYLVRSASLSGSTLALRGDSANETALEVFASKKVHTVTWNGKRIKTSRSSYGSLTASLAAPPAVSLPALSSAQWKSQDSLPERLPSYDDSGPAWVDANHMTTQNPRTPDTLPVLYADEYGFHNGIRLWRGSFTDAASGVYLNVQGGAAFGWSAYLNGHFLGSHLGTATTSQANKTLLFPAGTLRKNTTNTILVIHDDTGHDQTTGALNPRGILAARLLAPSDSSTAPNFTQWRVAGTAGGESDLDPVRGVYNEDGLFAERMGWHLPGFDDADWPANNSTTTRGAQVSLSVTGATVRFFRAVVPLHLPRGVDASISFMLGTPAGASTAYRAQLFVNGYQYGRFYPHIGNQVVYPVPAGVLDYDGENTIGVAVWAQSEAGAEMSLDWRVNYVADSSLDAVRVAAEGALRPGWSEERLQYA</sequence>
<proteinExistence type="inferred from homology"/>
<protein>
    <recommendedName>
        <fullName>Probable beta-galactosidase B</fullName>
        <ecNumber>3.2.1.23</ecNumber>
    </recommendedName>
    <alternativeName>
        <fullName>Lactase B</fullName>
    </alternativeName>
</protein>
<comment type="function">
    <text evidence="1">Cleaves beta-linked terminal galactosyl residues from gangliosides, glycoproteins, and glycosaminoglycans.</text>
</comment>
<comment type="catalytic activity">
    <reaction>
        <text>Hydrolysis of terminal non-reducing beta-D-galactose residues in beta-D-galactosides.</text>
        <dbReference type="EC" id="3.2.1.23"/>
    </reaction>
</comment>
<comment type="subcellular location">
    <subcellularLocation>
        <location evidence="1">Secreted</location>
    </subcellularLocation>
</comment>
<comment type="similarity">
    <text evidence="3">Belongs to the glycosyl hydrolase 35 family.</text>
</comment>
<comment type="sequence caution" evidence="3">
    <conflict type="erroneous gene model prediction">
        <sequence resource="EMBL-CDS" id="EAU34200"/>
    </conflict>
</comment>
<feature type="signal peptide" evidence="2">
    <location>
        <begin position="1"/>
        <end position="20"/>
    </location>
</feature>
<feature type="chain" id="PRO_0000395227" description="Probable beta-galactosidase B">
    <location>
        <begin position="21"/>
        <end position="1022"/>
    </location>
</feature>
<feature type="active site" description="Proton donor" evidence="2">
    <location>
        <position position="196"/>
    </location>
</feature>
<feature type="active site" description="Nucleophile" evidence="2">
    <location>
        <position position="308"/>
    </location>
</feature>
<feature type="binding site" evidence="1">
    <location>
        <position position="90"/>
    </location>
    <ligand>
        <name>substrate</name>
    </ligand>
</feature>
<feature type="binding site" evidence="1">
    <location>
        <position position="135"/>
    </location>
    <ligand>
        <name>substrate</name>
    </ligand>
</feature>
<feature type="binding site" evidence="1">
    <location>
        <position position="136"/>
    </location>
    <ligand>
        <name>substrate</name>
    </ligand>
</feature>
<feature type="binding site" evidence="1">
    <location>
        <position position="137"/>
    </location>
    <ligand>
        <name>substrate</name>
    </ligand>
</feature>
<feature type="binding site" evidence="1">
    <location>
        <position position="195"/>
    </location>
    <ligand>
        <name>substrate</name>
    </ligand>
</feature>
<feature type="binding site" evidence="1">
    <location>
        <position position="265"/>
    </location>
    <ligand>
        <name>substrate</name>
    </ligand>
</feature>
<feature type="binding site" evidence="1">
    <location>
        <position position="373"/>
    </location>
    <ligand>
        <name>substrate</name>
    </ligand>
</feature>
<feature type="glycosylation site" description="N-linked (GlcNAc...) asparagine" evidence="2">
    <location>
        <position position="23"/>
    </location>
</feature>
<feature type="glycosylation site" description="N-linked (GlcNAc...) asparagine" evidence="2">
    <location>
        <position position="100"/>
    </location>
</feature>
<feature type="glycosylation site" description="N-linked (GlcNAc...) asparagine" evidence="2">
    <location>
        <position position="211"/>
    </location>
</feature>
<feature type="glycosylation site" description="N-linked (GlcNAc...) asparagine" evidence="2">
    <location>
        <position position="411"/>
    </location>
</feature>
<feature type="glycosylation site" description="N-linked (GlcNAc...) asparagine" evidence="2">
    <location>
        <position position="456"/>
    </location>
</feature>
<feature type="glycosylation site" description="N-linked (GlcNAc...) asparagine" evidence="2">
    <location>
        <position position="541"/>
    </location>
</feature>
<feature type="glycosylation site" description="N-linked (GlcNAc...) asparagine" evidence="2">
    <location>
        <position position="554"/>
    </location>
</feature>
<feature type="glycosylation site" description="N-linked (GlcNAc...) asparagine" evidence="2">
    <location>
        <position position="626"/>
    </location>
</feature>
<feature type="glycosylation site" description="N-linked (GlcNAc...) asparagine" evidence="2">
    <location>
        <position position="777"/>
    </location>
</feature>
<feature type="glycosylation site" description="N-linked (GlcNAc...) asparagine" evidence="2">
    <location>
        <position position="790"/>
    </location>
</feature>
<feature type="glycosylation site" description="N-linked (GlcNAc...) asparagine" evidence="2">
    <location>
        <position position="832"/>
    </location>
</feature>
<feature type="glycosylation site" description="N-linked (GlcNAc...) asparagine" evidence="2">
    <location>
        <position position="880"/>
    </location>
</feature>
<feature type="glycosylation site" description="N-linked (GlcNAc...) asparagine" evidence="2">
    <location>
        <position position="881"/>
    </location>
</feature>
<feature type="disulfide bond" evidence="1">
    <location>
        <begin position="271"/>
        <end position="324"/>
    </location>
</feature>
<name>BGALB_ASPTN</name>
<organism>
    <name type="scientific">Aspergillus terreus (strain NIH 2624 / FGSC A1156)</name>
    <dbReference type="NCBI Taxonomy" id="341663"/>
    <lineage>
        <taxon>Eukaryota</taxon>
        <taxon>Fungi</taxon>
        <taxon>Dikarya</taxon>
        <taxon>Ascomycota</taxon>
        <taxon>Pezizomycotina</taxon>
        <taxon>Eurotiomycetes</taxon>
        <taxon>Eurotiomycetidae</taxon>
        <taxon>Eurotiales</taxon>
        <taxon>Aspergillaceae</taxon>
        <taxon>Aspergillus</taxon>
        <taxon>Aspergillus subgen. Circumdati</taxon>
    </lineage>
</organism>
<accession>Q0CMF3</accession>